<keyword id="KW-0002">3D-structure</keyword>
<keyword id="KW-0274">FAD</keyword>
<keyword id="KW-0285">Flavoprotein</keyword>
<keyword id="KW-0547">Nucleotide-binding</keyword>
<keyword id="KW-0560">Oxidoreductase</keyword>
<keyword id="KW-1185">Reference proteome</keyword>
<protein>
    <recommendedName>
        <fullName evidence="2">Nitroalkane oxidase</fullName>
        <shortName evidence="2">NAO</shortName>
        <ecNumber evidence="1">1.7.3.1</ecNumber>
    </recommendedName>
</protein>
<accession>B2AM55</accession>
<dbReference type="EC" id="1.7.3.1" evidence="1"/>
<dbReference type="EMBL" id="CU633870">
    <property type="protein sequence ID" value="CAP65043.1"/>
    <property type="molecule type" value="Genomic_DNA"/>
</dbReference>
<dbReference type="EMBL" id="FO904940">
    <property type="protein sequence ID" value="CDP29865.1"/>
    <property type="molecule type" value="Genomic_DNA"/>
</dbReference>
<dbReference type="RefSeq" id="XP_001905136.1">
    <property type="nucleotide sequence ID" value="XM_001905101.1"/>
</dbReference>
<dbReference type="PDB" id="3MKH">
    <property type="method" value="X-ray"/>
    <property type="resolution" value="2.00 A"/>
    <property type="chains" value="A/B/C/D=1-430"/>
</dbReference>
<dbReference type="PDBsum" id="3MKH"/>
<dbReference type="SMR" id="B2AM55"/>
<dbReference type="STRING" id="515849.B2AM55"/>
<dbReference type="GeneID" id="6189407"/>
<dbReference type="KEGG" id="pan:PODANSg2158"/>
<dbReference type="VEuPathDB" id="FungiDB:PODANS_5_6340"/>
<dbReference type="eggNOG" id="KOG0140">
    <property type="taxonomic scope" value="Eukaryota"/>
</dbReference>
<dbReference type="HOGENOM" id="CLU_018204_3_0_1"/>
<dbReference type="InParanoid" id="B2AM55"/>
<dbReference type="OrthoDB" id="10016597at2759"/>
<dbReference type="BRENDA" id="1.7.3.1">
    <property type="organism ID" value="4930"/>
</dbReference>
<dbReference type="EvolutionaryTrace" id="B2AM55"/>
<dbReference type="Proteomes" id="UP000001197">
    <property type="component" value="Chromosome 5"/>
</dbReference>
<dbReference type="GO" id="GO:0003995">
    <property type="term" value="F:acyl-CoA dehydrogenase activity"/>
    <property type="evidence" value="ECO:0007669"/>
    <property type="project" value="TreeGrafter"/>
</dbReference>
<dbReference type="GO" id="GO:0050660">
    <property type="term" value="F:flavin adenine dinucleotide binding"/>
    <property type="evidence" value="ECO:0007669"/>
    <property type="project" value="InterPro"/>
</dbReference>
<dbReference type="GO" id="GO:0052664">
    <property type="term" value="F:nitroalkane oxidase activity"/>
    <property type="evidence" value="ECO:0007669"/>
    <property type="project" value="UniProtKB-EC"/>
</dbReference>
<dbReference type="GO" id="GO:0046359">
    <property type="term" value="P:butyrate catabolic process"/>
    <property type="evidence" value="ECO:0007669"/>
    <property type="project" value="TreeGrafter"/>
</dbReference>
<dbReference type="GO" id="GO:0033539">
    <property type="term" value="P:fatty acid beta-oxidation using acyl-CoA dehydrogenase"/>
    <property type="evidence" value="ECO:0007669"/>
    <property type="project" value="TreeGrafter"/>
</dbReference>
<dbReference type="CDD" id="cd00567">
    <property type="entry name" value="ACAD"/>
    <property type="match status" value="1"/>
</dbReference>
<dbReference type="Gene3D" id="1.10.540.10">
    <property type="entry name" value="Acyl-CoA dehydrogenase/oxidase, N-terminal domain"/>
    <property type="match status" value="1"/>
</dbReference>
<dbReference type="Gene3D" id="2.40.110.10">
    <property type="entry name" value="Butyryl-CoA Dehydrogenase, subunit A, domain 2"/>
    <property type="match status" value="1"/>
</dbReference>
<dbReference type="Gene3D" id="1.20.140.10">
    <property type="entry name" value="Butyryl-CoA Dehydrogenase, subunit A, domain 3"/>
    <property type="match status" value="1"/>
</dbReference>
<dbReference type="InterPro" id="IPR046373">
    <property type="entry name" value="Acyl-CoA_Oxase/DH_mid-dom_sf"/>
</dbReference>
<dbReference type="InterPro" id="IPR036250">
    <property type="entry name" value="AcylCo_DH-like_C"/>
</dbReference>
<dbReference type="InterPro" id="IPR009075">
    <property type="entry name" value="AcylCo_DH/oxidase_C"/>
</dbReference>
<dbReference type="InterPro" id="IPR013786">
    <property type="entry name" value="AcylCoA_DH/ox_N"/>
</dbReference>
<dbReference type="InterPro" id="IPR037069">
    <property type="entry name" value="AcylCoA_DH/ox_N_sf"/>
</dbReference>
<dbReference type="InterPro" id="IPR009100">
    <property type="entry name" value="AcylCoA_DH/oxidase_NM_dom_sf"/>
</dbReference>
<dbReference type="PANTHER" id="PTHR43884">
    <property type="entry name" value="ACYL-COA DEHYDROGENASE"/>
    <property type="match status" value="1"/>
</dbReference>
<dbReference type="PANTHER" id="PTHR43884:SF12">
    <property type="entry name" value="ISOVALERYL-COA DEHYDROGENASE, MITOCHONDRIAL-RELATED"/>
    <property type="match status" value="1"/>
</dbReference>
<dbReference type="Pfam" id="PF00441">
    <property type="entry name" value="Acyl-CoA_dh_1"/>
    <property type="match status" value="1"/>
</dbReference>
<dbReference type="Pfam" id="PF02771">
    <property type="entry name" value="Acyl-CoA_dh_N"/>
    <property type="match status" value="1"/>
</dbReference>
<dbReference type="SUPFAM" id="SSF47203">
    <property type="entry name" value="Acyl-CoA dehydrogenase C-terminal domain-like"/>
    <property type="match status" value="1"/>
</dbReference>
<dbReference type="SUPFAM" id="SSF56645">
    <property type="entry name" value="Acyl-CoA dehydrogenase NM domain-like"/>
    <property type="match status" value="1"/>
</dbReference>
<reference key="1">
    <citation type="journal article" date="2008" name="Genome Biol.">
        <title>The genome sequence of the model ascomycete fungus Podospora anserina.</title>
        <authorList>
            <person name="Espagne E."/>
            <person name="Lespinet O."/>
            <person name="Malagnac F."/>
            <person name="Da Silva C."/>
            <person name="Jaillon O."/>
            <person name="Porcel B.M."/>
            <person name="Couloux A."/>
            <person name="Aury J.-M."/>
            <person name="Segurens B."/>
            <person name="Poulain J."/>
            <person name="Anthouard V."/>
            <person name="Grossetete S."/>
            <person name="Khalili H."/>
            <person name="Coppin E."/>
            <person name="Dequard-Chablat M."/>
            <person name="Picard M."/>
            <person name="Contamine V."/>
            <person name="Arnaise S."/>
            <person name="Bourdais A."/>
            <person name="Berteaux-Lecellier V."/>
            <person name="Gautheret D."/>
            <person name="de Vries R.P."/>
            <person name="Battaglia E."/>
            <person name="Coutinho P.M."/>
            <person name="Danchin E.G.J."/>
            <person name="Henrissat B."/>
            <person name="El Khoury R."/>
            <person name="Sainsard-Chanet A."/>
            <person name="Boivin A."/>
            <person name="Pinan-Lucarre B."/>
            <person name="Sellem C.H."/>
            <person name="Debuchy R."/>
            <person name="Wincker P."/>
            <person name="Weissenbach J."/>
            <person name="Silar P."/>
        </authorList>
    </citation>
    <scope>NUCLEOTIDE SEQUENCE [LARGE SCALE GENOMIC DNA]</scope>
    <source>
        <strain>S / ATCC MYA-4624 / DSM 980 / FGSC 10383</strain>
    </source>
</reference>
<reference key="2">
    <citation type="journal article" date="2014" name="Genetics">
        <title>Maintaining two mating types: Structure of the mating type locus and its role in heterokaryosis in Podospora anserina.</title>
        <authorList>
            <person name="Grognet P."/>
            <person name="Bidard F."/>
            <person name="Kuchly C."/>
            <person name="Tong L.C.H."/>
            <person name="Coppin E."/>
            <person name="Benkhali J.A."/>
            <person name="Couloux A."/>
            <person name="Wincker P."/>
            <person name="Debuchy R."/>
            <person name="Silar P."/>
        </authorList>
    </citation>
    <scope>GENOME REANNOTATION</scope>
    <source>
        <strain>S / ATCC MYA-4624 / DSM 980 / FGSC 10383</strain>
    </source>
</reference>
<reference key="3">
    <citation type="journal article" date="2010" name="Biochemistry">
        <title>Identification of a hypothetical protein from Podospora anserina as a nitroalkane oxidase.</title>
        <authorList>
            <person name="Tormos J.R."/>
            <person name="Taylor A.B."/>
            <person name="Daubner S.C."/>
            <person name="Hart P.J."/>
            <person name="Fitzpatrick P.F."/>
        </authorList>
    </citation>
    <scope>X-RAY CRYSTALLOGRAPHY (2.00 ANGSTROMS) IN COMPLEX WITH FAD</scope>
    <scope>COFACTOR</scope>
    <scope>SUBUNIT</scope>
    <scope>FUNCTION</scope>
    <scope>CATALYTIC ACTIVITY</scope>
    <scope>BIOPHYSICOCHEMICAL PROPERTIES</scope>
    <scope>ACTIVE SITE</scope>
    <scope>MUTAGENESIS OF SER-273; ASP-399 AND ARG-406</scope>
</reference>
<name>NAO_PODAN</name>
<evidence type="ECO:0000269" key="1">
    <source>
    </source>
</evidence>
<evidence type="ECO:0000303" key="2">
    <source>
    </source>
</evidence>
<evidence type="ECO:0000305" key="3"/>
<evidence type="ECO:0000305" key="4">
    <source>
    </source>
</evidence>
<evidence type="ECO:0007829" key="5">
    <source>
        <dbReference type="PDB" id="3MKH"/>
    </source>
</evidence>
<organism>
    <name type="scientific">Podospora anserina (strain S / ATCC MYA-4624 / DSM 980 / FGSC 10383)</name>
    <name type="common">Pleurage anserina</name>
    <dbReference type="NCBI Taxonomy" id="515849"/>
    <lineage>
        <taxon>Eukaryota</taxon>
        <taxon>Fungi</taxon>
        <taxon>Dikarya</taxon>
        <taxon>Ascomycota</taxon>
        <taxon>Pezizomycotina</taxon>
        <taxon>Sordariomycetes</taxon>
        <taxon>Sordariomycetidae</taxon>
        <taxon>Sordariales</taxon>
        <taxon>Podosporaceae</taxon>
        <taxon>Podospora</taxon>
        <taxon>Podospora anserina</taxon>
    </lineage>
</organism>
<comment type="function">
    <text evidence="1">Nitroalkane oxidase (NAO) catalyzes the oxidation of nitroalkanes to the corresponding aldehydes or ketones with the release of nitrite and the consumption of molecular oxygen to yield hydrogen peroxide (PubMed:20481475). NAO is unusual, since it catalyzes substrate oxidation by removing a substrate proton to form a carbanion intermediate (PubMed:20481475). Prefers longer nitroalkanes, with 1-nitrohexane having the highest activity (PubMed:20481475).</text>
</comment>
<comment type="catalytic activity">
    <reaction evidence="1">
        <text>a primary nitroalkane + O2 + H2O = an aldehyde + nitrite + H2O2 + H(+)</text>
        <dbReference type="Rhea" id="RHEA:20976"/>
        <dbReference type="ChEBI" id="CHEBI:15377"/>
        <dbReference type="ChEBI" id="CHEBI:15378"/>
        <dbReference type="ChEBI" id="CHEBI:15379"/>
        <dbReference type="ChEBI" id="CHEBI:16240"/>
        <dbReference type="ChEBI" id="CHEBI:16301"/>
        <dbReference type="ChEBI" id="CHEBI:17478"/>
        <dbReference type="ChEBI" id="CHEBI:133972"/>
        <dbReference type="EC" id="1.7.3.1"/>
    </reaction>
</comment>
<comment type="catalytic activity">
    <reaction evidence="1">
        <text>a secondary nitroalkane + O2 + H2O = a ketone + nitrite + H2O2 + H(+)</text>
        <dbReference type="Rhea" id="RHEA:26490"/>
        <dbReference type="ChEBI" id="CHEBI:15377"/>
        <dbReference type="ChEBI" id="CHEBI:15378"/>
        <dbReference type="ChEBI" id="CHEBI:15379"/>
        <dbReference type="ChEBI" id="CHEBI:16240"/>
        <dbReference type="ChEBI" id="CHEBI:16301"/>
        <dbReference type="ChEBI" id="CHEBI:17087"/>
        <dbReference type="ChEBI" id="CHEBI:139218"/>
        <dbReference type="EC" id="1.7.3.1"/>
    </reaction>
</comment>
<comment type="cofactor">
    <cofactor evidence="1">
        <name>FAD</name>
        <dbReference type="ChEBI" id="CHEBI:57692"/>
    </cofactor>
</comment>
<comment type="biophysicochemical properties">
    <kinetics>
        <KM evidence="1">13 mM for nitroethane</KM>
        <KM evidence="1">0.39 mM for O(2)</KM>
    </kinetics>
    <phDependence>
        <text evidence="1">Optimally active at alkaline pHs.</text>
    </phDependence>
</comment>
<comment type="subunit">
    <text evidence="1">Homotetramer.</text>
</comment>
<comment type="similarity">
    <text evidence="3">Belongs to the acyl-CoA dehydrogenase family.</text>
</comment>
<gene>
    <name type="ordered locus">Pa_5_6340</name>
    <name type="ORF">PODANS_5_6340</name>
</gene>
<sequence>MPIDFHLSASQKGTYQAARSLARNLLMPARQTYLQHPPNSPLRFQSTQPTYAAAVSAGILKGQISPAHGGTGGTLIESAILVEECYSVEPSAALTIFATGLGLTPINLAAGPQHAEFLAPFLSGEGSPLASLVFSEPGGVANALEKGAPGFQTTARLEGDEWVINGEKMWATNCAGWDFKGCDLACVVCRDATTPLEEGQDPENKVMIILVTRADLDRNGEGSFEVLRHVATPGHTSVSGPHVRYTNVRVPTKNVLCPAGQGAKVAFGAFDGSAVLVGAMGVGLMRAAFDAALKFAKEDNRGGAVPLLERQAFADLLSGVKIQTEAARALTWKAAHAMENGPGDYDARRELALAAKVFCSEAAVKACTDVINAVGISAYDLQRPFSDLLNTAVVLPIFDGGNVGIRRRHLQQLMLKPTYDAWSSTYGSFP</sequence>
<feature type="chain" id="PRO_0000437677" description="Nitroalkane oxidase">
    <location>
        <begin position="1"/>
        <end position="430"/>
    </location>
</feature>
<feature type="active site" description="Proton acceptor" evidence="4">
    <location>
        <position position="399"/>
    </location>
</feature>
<feature type="binding site" evidence="1">
    <location>
        <begin position="132"/>
        <end position="135"/>
    </location>
    <ligand>
        <name>FAD</name>
        <dbReference type="ChEBI" id="CHEBI:57692"/>
    </ligand>
</feature>
<feature type="binding site" evidence="1">
    <location>
        <begin position="140"/>
        <end position="142"/>
    </location>
    <ligand>
        <name>FAD</name>
        <dbReference type="ChEBI" id="CHEBI:57692"/>
    </ligand>
</feature>
<feature type="binding site" evidence="1">
    <location>
        <begin position="170"/>
        <end position="172"/>
    </location>
    <ligand>
        <name>FAD</name>
        <dbReference type="ChEBI" id="CHEBI:57692"/>
    </ligand>
</feature>
<feature type="binding site" evidence="1">
    <location>
        <position position="301"/>
    </location>
    <ligand>
        <name>FAD</name>
        <dbReference type="ChEBI" id="CHEBI:57692"/>
    </ligand>
</feature>
<feature type="binding site" evidence="1">
    <location>
        <position position="311"/>
    </location>
    <ligand>
        <name>FAD</name>
        <dbReference type="ChEBI" id="CHEBI:57692"/>
    </ligand>
</feature>
<feature type="binding site" evidence="1">
    <location>
        <begin position="372"/>
        <end position="376"/>
    </location>
    <ligand>
        <name>FAD</name>
        <dbReference type="ChEBI" id="CHEBI:57692"/>
    </ligand>
</feature>
<feature type="binding site" evidence="1">
    <location>
        <begin position="397"/>
        <end position="401"/>
    </location>
    <ligand>
        <name>FAD</name>
        <dbReference type="ChEBI" id="CHEBI:57692"/>
    </ligand>
</feature>
<feature type="mutagenesis site" description="Slightly decreases the catalytic activity." evidence="1">
    <original>S</original>
    <variation>A</variation>
    <location>
        <position position="273"/>
    </location>
</feature>
<feature type="mutagenesis site" description="Strongly decreases the catalytic activity." evidence="1">
    <original>D</original>
    <variation>N</variation>
    <location>
        <position position="399"/>
    </location>
</feature>
<feature type="mutagenesis site" description="Slightly decreases the catalytic activity." evidence="1">
    <original>R</original>
    <variation>K</variation>
    <location>
        <position position="406"/>
    </location>
</feature>
<feature type="helix" evidence="5">
    <location>
        <begin position="9"/>
        <end position="24"/>
    </location>
</feature>
<feature type="helix" evidence="5">
    <location>
        <begin position="26"/>
        <end position="33"/>
    </location>
</feature>
<feature type="helix" evidence="5">
    <location>
        <begin position="42"/>
        <end position="45"/>
    </location>
</feature>
<feature type="helix" evidence="5">
    <location>
        <begin position="48"/>
        <end position="56"/>
    </location>
</feature>
<feature type="turn" evidence="5">
    <location>
        <begin position="57"/>
        <end position="60"/>
    </location>
</feature>
<feature type="helix" evidence="5">
    <location>
        <begin position="61"/>
        <end position="63"/>
    </location>
</feature>
<feature type="helix" evidence="5">
    <location>
        <begin position="66"/>
        <end position="68"/>
    </location>
</feature>
<feature type="helix" evidence="5">
    <location>
        <begin position="75"/>
        <end position="88"/>
    </location>
</feature>
<feature type="helix" evidence="5">
    <location>
        <begin position="90"/>
        <end position="109"/>
    </location>
</feature>
<feature type="helix" evidence="5">
    <location>
        <begin position="112"/>
        <end position="114"/>
    </location>
</feature>
<feature type="helix" evidence="5">
    <location>
        <begin position="115"/>
        <end position="118"/>
    </location>
</feature>
<feature type="helix" evidence="5">
    <location>
        <begin position="119"/>
        <end position="121"/>
    </location>
</feature>
<feature type="strand" evidence="5">
    <location>
        <begin position="122"/>
        <end position="124"/>
    </location>
</feature>
<feature type="strand" evidence="5">
    <location>
        <begin position="130"/>
        <end position="133"/>
    </location>
</feature>
<feature type="turn" evidence="5">
    <location>
        <begin position="141"/>
        <end position="144"/>
    </location>
</feature>
<feature type="strand" evidence="5">
    <location>
        <begin position="154"/>
        <end position="158"/>
    </location>
</feature>
<feature type="strand" evidence="5">
    <location>
        <begin position="161"/>
        <end position="168"/>
    </location>
</feature>
<feature type="turn" evidence="5">
    <location>
        <begin position="172"/>
        <end position="175"/>
    </location>
</feature>
<feature type="strand" evidence="5">
    <location>
        <begin position="183"/>
        <end position="191"/>
    </location>
</feature>
<feature type="helix" evidence="5">
    <location>
        <begin position="202"/>
        <end position="205"/>
    </location>
</feature>
<feature type="strand" evidence="5">
    <location>
        <begin position="206"/>
        <end position="212"/>
    </location>
</feature>
<feature type="helix" evidence="5">
    <location>
        <begin position="213"/>
        <end position="219"/>
    </location>
</feature>
<feature type="strand" evidence="5">
    <location>
        <begin position="223"/>
        <end position="228"/>
    </location>
</feature>
<feature type="strand" evidence="5">
    <location>
        <begin position="242"/>
        <end position="251"/>
    </location>
</feature>
<feature type="helix" evidence="5">
    <location>
        <begin position="252"/>
        <end position="254"/>
    </location>
</feature>
<feature type="strand" evidence="5">
    <location>
        <begin position="255"/>
        <end position="257"/>
    </location>
</feature>
<feature type="turn" evidence="5">
    <location>
        <begin position="259"/>
        <end position="261"/>
    </location>
</feature>
<feature type="helix" evidence="5">
    <location>
        <begin position="262"/>
        <end position="298"/>
    </location>
</feature>
<feature type="helix" evidence="5">
    <location>
        <begin position="307"/>
        <end position="309"/>
    </location>
</feature>
<feature type="helix" evidence="5">
    <location>
        <begin position="311"/>
        <end position="340"/>
    </location>
</feature>
<feature type="helix" evidence="5">
    <location>
        <begin position="345"/>
        <end position="374"/>
    </location>
</feature>
<feature type="helix" evidence="5">
    <location>
        <begin position="375"/>
        <end position="379"/>
    </location>
</feature>
<feature type="helix" evidence="5">
    <location>
        <begin position="385"/>
        <end position="392"/>
    </location>
</feature>
<feature type="helix" evidence="5">
    <location>
        <begin position="394"/>
        <end position="397"/>
    </location>
</feature>
<feature type="strand" evidence="5">
    <location>
        <begin position="398"/>
        <end position="400"/>
    </location>
</feature>
<feature type="turn" evidence="5">
    <location>
        <begin position="402"/>
        <end position="405"/>
    </location>
</feature>
<feature type="helix" evidence="5">
    <location>
        <begin position="406"/>
        <end position="415"/>
    </location>
</feature>
<feature type="helix" evidence="5">
    <location>
        <begin position="423"/>
        <end position="426"/>
    </location>
</feature>
<proteinExistence type="evidence at protein level"/>